<proteinExistence type="inferred from homology"/>
<name>KTHY_XYLFT</name>
<accession>Q87B89</accession>
<reference key="1">
    <citation type="journal article" date="2003" name="J. Bacteriol.">
        <title>Comparative analyses of the complete genome sequences of Pierce's disease and citrus variegated chlorosis strains of Xylella fastidiosa.</title>
        <authorList>
            <person name="Van Sluys M.A."/>
            <person name="de Oliveira M.C."/>
            <person name="Monteiro-Vitorello C.B."/>
            <person name="Miyaki C.Y."/>
            <person name="Furlan L.R."/>
            <person name="Camargo L.E.A."/>
            <person name="da Silva A.C.R."/>
            <person name="Moon D.H."/>
            <person name="Takita M.A."/>
            <person name="Lemos E.G.M."/>
            <person name="Machado M.A."/>
            <person name="Ferro M.I.T."/>
            <person name="da Silva F.R."/>
            <person name="Goldman M.H.S."/>
            <person name="Goldman G.H."/>
            <person name="Lemos M.V.F."/>
            <person name="El-Dorry H."/>
            <person name="Tsai S.M."/>
            <person name="Carrer H."/>
            <person name="Carraro D.M."/>
            <person name="de Oliveira R.C."/>
            <person name="Nunes L.R."/>
            <person name="Siqueira W.J."/>
            <person name="Coutinho L.L."/>
            <person name="Kimura E.T."/>
            <person name="Ferro E.S."/>
            <person name="Harakava R."/>
            <person name="Kuramae E.E."/>
            <person name="Marino C.L."/>
            <person name="Giglioti E."/>
            <person name="Abreu I.L."/>
            <person name="Alves L.M.C."/>
            <person name="do Amaral A.M."/>
            <person name="Baia G.S."/>
            <person name="Blanco S.R."/>
            <person name="Brito M.S."/>
            <person name="Cannavan F.S."/>
            <person name="Celestino A.V."/>
            <person name="da Cunha A.F."/>
            <person name="Fenille R.C."/>
            <person name="Ferro J.A."/>
            <person name="Formighieri E.F."/>
            <person name="Kishi L.T."/>
            <person name="Leoni S.G."/>
            <person name="Oliveira A.R."/>
            <person name="Rosa V.E. Jr."/>
            <person name="Sassaki F.T."/>
            <person name="Sena J.A.D."/>
            <person name="de Souza A.A."/>
            <person name="Truffi D."/>
            <person name="Tsukumo F."/>
            <person name="Yanai G.M."/>
            <person name="Zaros L.G."/>
            <person name="Civerolo E.L."/>
            <person name="Simpson A.J.G."/>
            <person name="Almeida N.F. Jr."/>
            <person name="Setubal J.C."/>
            <person name="Kitajima J.P."/>
        </authorList>
    </citation>
    <scope>NUCLEOTIDE SEQUENCE [LARGE SCALE GENOMIC DNA]</scope>
    <source>
        <strain>Temecula1 / ATCC 700964</strain>
    </source>
</reference>
<keyword id="KW-0067">ATP-binding</keyword>
<keyword id="KW-0418">Kinase</keyword>
<keyword id="KW-0545">Nucleotide biosynthesis</keyword>
<keyword id="KW-0547">Nucleotide-binding</keyword>
<keyword id="KW-1185">Reference proteome</keyword>
<keyword id="KW-0808">Transferase</keyword>
<organism>
    <name type="scientific">Xylella fastidiosa (strain Temecula1 / ATCC 700964)</name>
    <dbReference type="NCBI Taxonomy" id="183190"/>
    <lineage>
        <taxon>Bacteria</taxon>
        <taxon>Pseudomonadati</taxon>
        <taxon>Pseudomonadota</taxon>
        <taxon>Gammaproteobacteria</taxon>
        <taxon>Lysobacterales</taxon>
        <taxon>Lysobacteraceae</taxon>
        <taxon>Xylella</taxon>
    </lineage>
</organism>
<dbReference type="EC" id="2.7.4.9" evidence="1"/>
<dbReference type="EMBL" id="AE009442">
    <property type="protein sequence ID" value="AAO29411.1"/>
    <property type="molecule type" value="Genomic_DNA"/>
</dbReference>
<dbReference type="SMR" id="Q87B89"/>
<dbReference type="KEGG" id="xft:PD_1569"/>
<dbReference type="HOGENOM" id="CLU_049131_0_2_6"/>
<dbReference type="Proteomes" id="UP000002516">
    <property type="component" value="Chromosome"/>
</dbReference>
<dbReference type="GO" id="GO:0005829">
    <property type="term" value="C:cytosol"/>
    <property type="evidence" value="ECO:0007669"/>
    <property type="project" value="TreeGrafter"/>
</dbReference>
<dbReference type="GO" id="GO:0005524">
    <property type="term" value="F:ATP binding"/>
    <property type="evidence" value="ECO:0007669"/>
    <property type="project" value="UniProtKB-UniRule"/>
</dbReference>
<dbReference type="GO" id="GO:0004798">
    <property type="term" value="F:dTMP kinase activity"/>
    <property type="evidence" value="ECO:0007669"/>
    <property type="project" value="UniProtKB-UniRule"/>
</dbReference>
<dbReference type="GO" id="GO:0006233">
    <property type="term" value="P:dTDP biosynthetic process"/>
    <property type="evidence" value="ECO:0007669"/>
    <property type="project" value="InterPro"/>
</dbReference>
<dbReference type="GO" id="GO:0006235">
    <property type="term" value="P:dTTP biosynthetic process"/>
    <property type="evidence" value="ECO:0007669"/>
    <property type="project" value="UniProtKB-UniRule"/>
</dbReference>
<dbReference type="GO" id="GO:0006227">
    <property type="term" value="P:dUDP biosynthetic process"/>
    <property type="evidence" value="ECO:0007669"/>
    <property type="project" value="TreeGrafter"/>
</dbReference>
<dbReference type="CDD" id="cd01672">
    <property type="entry name" value="TMPK"/>
    <property type="match status" value="1"/>
</dbReference>
<dbReference type="Gene3D" id="3.40.50.300">
    <property type="entry name" value="P-loop containing nucleotide triphosphate hydrolases"/>
    <property type="match status" value="1"/>
</dbReference>
<dbReference type="HAMAP" id="MF_00165">
    <property type="entry name" value="Thymidylate_kinase"/>
    <property type="match status" value="1"/>
</dbReference>
<dbReference type="InterPro" id="IPR027417">
    <property type="entry name" value="P-loop_NTPase"/>
</dbReference>
<dbReference type="InterPro" id="IPR039430">
    <property type="entry name" value="Thymidylate_kin-like_dom"/>
</dbReference>
<dbReference type="InterPro" id="IPR018094">
    <property type="entry name" value="Thymidylate_kinase"/>
</dbReference>
<dbReference type="NCBIfam" id="TIGR00041">
    <property type="entry name" value="DTMP_kinase"/>
    <property type="match status" value="1"/>
</dbReference>
<dbReference type="PANTHER" id="PTHR10344">
    <property type="entry name" value="THYMIDYLATE KINASE"/>
    <property type="match status" value="1"/>
</dbReference>
<dbReference type="PANTHER" id="PTHR10344:SF4">
    <property type="entry name" value="UMP-CMP KINASE 2, MITOCHONDRIAL"/>
    <property type="match status" value="1"/>
</dbReference>
<dbReference type="Pfam" id="PF02223">
    <property type="entry name" value="Thymidylate_kin"/>
    <property type="match status" value="1"/>
</dbReference>
<dbReference type="SUPFAM" id="SSF52540">
    <property type="entry name" value="P-loop containing nucleoside triphosphate hydrolases"/>
    <property type="match status" value="1"/>
</dbReference>
<gene>
    <name evidence="1" type="primary">tmk</name>
    <name type="ordered locus">PD_1569</name>
</gene>
<evidence type="ECO:0000255" key="1">
    <source>
        <dbReference type="HAMAP-Rule" id="MF_00165"/>
    </source>
</evidence>
<protein>
    <recommendedName>
        <fullName evidence="1">Thymidylate kinase</fullName>
        <ecNumber evidence="1">2.7.4.9</ecNumber>
    </recommendedName>
    <alternativeName>
        <fullName evidence="1">dTMP kinase</fullName>
    </alternativeName>
</protein>
<comment type="function">
    <text evidence="1">Phosphorylation of dTMP to form dTDP in both de novo and salvage pathways of dTTP synthesis.</text>
</comment>
<comment type="catalytic activity">
    <reaction evidence="1">
        <text>dTMP + ATP = dTDP + ADP</text>
        <dbReference type="Rhea" id="RHEA:13517"/>
        <dbReference type="ChEBI" id="CHEBI:30616"/>
        <dbReference type="ChEBI" id="CHEBI:58369"/>
        <dbReference type="ChEBI" id="CHEBI:63528"/>
        <dbReference type="ChEBI" id="CHEBI:456216"/>
        <dbReference type="EC" id="2.7.4.9"/>
    </reaction>
</comment>
<comment type="similarity">
    <text evidence="1">Belongs to the thymidylate kinase family.</text>
</comment>
<sequence length="208" mass="22455">MLVAIEGIDGAGKTTLARSLALKLRGVGLETVVSKEPTNGPWGTLLRQSAVTGRFSPEEEVDVLLRDRRQHVEDLIVPMIGRGAVVILDRYFPSMVAYQGAAGLPVDALLEANAFAPRPDVLLLLDVPPVIGLQRIWERGSTPNHFETTENLSRCRDIFLALELPSKRVIDATANAETVFSAALGLVMEVLRVRLGALGAVVLERLAG</sequence>
<feature type="chain" id="PRO_0000155378" description="Thymidylate kinase">
    <location>
        <begin position="1"/>
        <end position="208"/>
    </location>
</feature>
<feature type="binding site" evidence="1">
    <location>
        <begin position="7"/>
        <end position="14"/>
    </location>
    <ligand>
        <name>ATP</name>
        <dbReference type="ChEBI" id="CHEBI:30616"/>
    </ligand>
</feature>